<feature type="chain" id="PRO_0000323318" description="Small ribosomal subunit protein uS3c">
    <location>
        <begin position="1"/>
        <end position="218"/>
    </location>
</feature>
<feature type="domain" description="KH type-2">
    <location>
        <begin position="43"/>
        <end position="118"/>
    </location>
</feature>
<protein>
    <recommendedName>
        <fullName evidence="2">Small ribosomal subunit protein uS3c</fullName>
    </recommendedName>
    <alternativeName>
        <fullName>30S ribosomal protein S3, chloroplastic</fullName>
    </alternativeName>
</protein>
<sequence>MGQKINPLGFRLGTTQGHHSLWFAQPKSYSEGLQEDQKIRDCIKNYVQKNMRISSGAEGIARIEIQKRIDLIQVIIYMGFPKLLIEGRPRGVEELQINVQKEFNSVNRKLNIAITRIAKPYGQPNILAEFIAGQLKNRVSFRKAMKKAIELTEQADTKGIQIQIAGRIDGKEIARVEWIREGRVPLQTIRAKIYYCSYTVRTIYGVLGIKIWIFVDEE</sequence>
<keyword id="KW-0150">Chloroplast</keyword>
<keyword id="KW-0934">Plastid</keyword>
<keyword id="KW-0687">Ribonucleoprotein</keyword>
<keyword id="KW-0689">Ribosomal protein</keyword>
<keyword id="KW-0694">RNA-binding</keyword>
<keyword id="KW-0699">rRNA-binding</keyword>
<accession>A6MM75</accession>
<geneLocation type="chloroplast"/>
<reference key="1">
    <citation type="journal article" date="2007" name="Mol. Phylogenet. Evol.">
        <title>Phylogenetic and evolutionary implications of complete chloroplast genome sequences of four early-diverging angiosperms: Buxus (Buxaceae), Chloranthus (Chloranthaceae), Dioscorea (Dioscoreaceae), and Illicium (Schisandraceae).</title>
        <authorList>
            <person name="Hansen D.R."/>
            <person name="Dastidar S.G."/>
            <person name="Cai Z."/>
            <person name="Penaflor C."/>
            <person name="Kuehl J.V."/>
            <person name="Boore J.L."/>
            <person name="Jansen R.K."/>
        </authorList>
    </citation>
    <scope>NUCLEOTIDE SEQUENCE [LARGE SCALE GENOMIC DNA]</scope>
</reference>
<dbReference type="EMBL" id="EF380351">
    <property type="protein sequence ID" value="ABQ45287.1"/>
    <property type="molecule type" value="Genomic_DNA"/>
</dbReference>
<dbReference type="RefSeq" id="YP_001294223.1">
    <property type="nucleotide sequence ID" value="NC_009599.1"/>
</dbReference>
<dbReference type="SMR" id="A6MM75"/>
<dbReference type="GeneID" id="5236868"/>
<dbReference type="GO" id="GO:0009507">
    <property type="term" value="C:chloroplast"/>
    <property type="evidence" value="ECO:0007669"/>
    <property type="project" value="UniProtKB-SubCell"/>
</dbReference>
<dbReference type="GO" id="GO:0022627">
    <property type="term" value="C:cytosolic small ribosomal subunit"/>
    <property type="evidence" value="ECO:0007669"/>
    <property type="project" value="TreeGrafter"/>
</dbReference>
<dbReference type="GO" id="GO:0019843">
    <property type="term" value="F:rRNA binding"/>
    <property type="evidence" value="ECO:0007669"/>
    <property type="project" value="UniProtKB-UniRule"/>
</dbReference>
<dbReference type="GO" id="GO:0003735">
    <property type="term" value="F:structural constituent of ribosome"/>
    <property type="evidence" value="ECO:0007669"/>
    <property type="project" value="InterPro"/>
</dbReference>
<dbReference type="GO" id="GO:0006412">
    <property type="term" value="P:translation"/>
    <property type="evidence" value="ECO:0007669"/>
    <property type="project" value="UniProtKB-UniRule"/>
</dbReference>
<dbReference type="CDD" id="cd02412">
    <property type="entry name" value="KH-II_30S_S3"/>
    <property type="match status" value="1"/>
</dbReference>
<dbReference type="FunFam" id="3.30.1140.32:FF:000003">
    <property type="entry name" value="30S ribosomal protein S3, chloroplastic"/>
    <property type="match status" value="1"/>
</dbReference>
<dbReference type="FunFam" id="3.30.300.20:FF:000008">
    <property type="entry name" value="30S ribosomal protein S3, chloroplastic"/>
    <property type="match status" value="1"/>
</dbReference>
<dbReference type="Gene3D" id="3.30.300.20">
    <property type="match status" value="1"/>
</dbReference>
<dbReference type="Gene3D" id="3.30.1140.32">
    <property type="entry name" value="Ribosomal protein S3, C-terminal domain"/>
    <property type="match status" value="1"/>
</dbReference>
<dbReference type="HAMAP" id="MF_01309_B">
    <property type="entry name" value="Ribosomal_uS3_B"/>
    <property type="match status" value="1"/>
</dbReference>
<dbReference type="InterPro" id="IPR015946">
    <property type="entry name" value="KH_dom-like_a/b"/>
</dbReference>
<dbReference type="InterPro" id="IPR004044">
    <property type="entry name" value="KH_dom_type_2"/>
</dbReference>
<dbReference type="InterPro" id="IPR009019">
    <property type="entry name" value="KH_sf_prok-type"/>
</dbReference>
<dbReference type="InterPro" id="IPR036419">
    <property type="entry name" value="Ribosomal_S3_C_sf"/>
</dbReference>
<dbReference type="InterPro" id="IPR005704">
    <property type="entry name" value="Ribosomal_uS3_bac-typ"/>
</dbReference>
<dbReference type="InterPro" id="IPR001351">
    <property type="entry name" value="Ribosomal_uS3_C"/>
</dbReference>
<dbReference type="NCBIfam" id="TIGR01009">
    <property type="entry name" value="rpsC_bact"/>
    <property type="match status" value="1"/>
</dbReference>
<dbReference type="PANTHER" id="PTHR11760">
    <property type="entry name" value="30S/40S RIBOSOMAL PROTEIN S3"/>
    <property type="match status" value="1"/>
</dbReference>
<dbReference type="PANTHER" id="PTHR11760:SF19">
    <property type="entry name" value="SMALL RIBOSOMAL SUBUNIT PROTEIN US3C"/>
    <property type="match status" value="1"/>
</dbReference>
<dbReference type="Pfam" id="PF00189">
    <property type="entry name" value="Ribosomal_S3_C"/>
    <property type="match status" value="1"/>
</dbReference>
<dbReference type="SUPFAM" id="SSF54814">
    <property type="entry name" value="Prokaryotic type KH domain (KH-domain type II)"/>
    <property type="match status" value="1"/>
</dbReference>
<dbReference type="SUPFAM" id="SSF54821">
    <property type="entry name" value="Ribosomal protein S3 C-terminal domain"/>
    <property type="match status" value="1"/>
</dbReference>
<dbReference type="PROSITE" id="PS50823">
    <property type="entry name" value="KH_TYPE_2"/>
    <property type="match status" value="1"/>
</dbReference>
<organism>
    <name type="scientific">Buxus microphylla</name>
    <name type="common">Littleleaf boxwood</name>
    <name type="synonym">Japanese boxwood</name>
    <dbReference type="NCBI Taxonomy" id="153571"/>
    <lineage>
        <taxon>Eukaryota</taxon>
        <taxon>Viridiplantae</taxon>
        <taxon>Streptophyta</taxon>
        <taxon>Embryophyta</taxon>
        <taxon>Tracheophyta</taxon>
        <taxon>Spermatophyta</taxon>
        <taxon>Magnoliopsida</taxon>
        <taxon>Buxales</taxon>
        <taxon>Buxaceae</taxon>
        <taxon>Buxus</taxon>
    </lineage>
</organism>
<proteinExistence type="inferred from homology"/>
<gene>
    <name type="primary">rps3</name>
</gene>
<name>RR3_BUXMI</name>
<comment type="subunit">
    <text evidence="1">Part of the 30S ribosomal subunit.</text>
</comment>
<comment type="subcellular location">
    <subcellularLocation>
        <location>Plastid</location>
        <location>Chloroplast</location>
    </subcellularLocation>
</comment>
<comment type="similarity">
    <text evidence="2">Belongs to the universal ribosomal protein uS3 family.</text>
</comment>
<evidence type="ECO:0000250" key="1"/>
<evidence type="ECO:0000305" key="2"/>